<dbReference type="EMBL" id="CP000300">
    <property type="protein sequence ID" value="ABE51909.1"/>
    <property type="molecule type" value="Genomic_DNA"/>
</dbReference>
<dbReference type="RefSeq" id="WP_011499058.1">
    <property type="nucleotide sequence ID" value="NC_007955.1"/>
</dbReference>
<dbReference type="SMR" id="Q12XB7"/>
<dbReference type="STRING" id="259564.Mbur_0968"/>
<dbReference type="GeneID" id="3997891"/>
<dbReference type="KEGG" id="mbu:Mbur_0968"/>
<dbReference type="HOGENOM" id="CLU_138334_0_0_2"/>
<dbReference type="OrthoDB" id="63517at2157"/>
<dbReference type="Proteomes" id="UP000001979">
    <property type="component" value="Chromosome"/>
</dbReference>
<dbReference type="HAMAP" id="MF_01223">
    <property type="entry name" value="UPF0212"/>
    <property type="match status" value="1"/>
</dbReference>
<dbReference type="InterPro" id="IPR007564">
    <property type="entry name" value="UPF0212"/>
</dbReference>
<dbReference type="NCBIfam" id="NF003035">
    <property type="entry name" value="PRK03922.1"/>
    <property type="match status" value="1"/>
</dbReference>
<dbReference type="PANTHER" id="PTHR42199">
    <property type="entry name" value="UPF0212 PROTEIN MJ0068"/>
    <property type="match status" value="1"/>
</dbReference>
<dbReference type="PANTHER" id="PTHR42199:SF1">
    <property type="entry name" value="UPF0212 PROTEIN TK1194"/>
    <property type="match status" value="1"/>
</dbReference>
<dbReference type="Pfam" id="PF04475">
    <property type="entry name" value="DUF555"/>
    <property type="match status" value="1"/>
</dbReference>
<dbReference type="PIRSF" id="PIRSF016934">
    <property type="entry name" value="UCP016934"/>
    <property type="match status" value="1"/>
</dbReference>
<comment type="similarity">
    <text evidence="1">Belongs to the UPF0212 family.</text>
</comment>
<sequence length="114" mass="12272">MTNYHVTLEAAWLVRDVETADDAIGVAISEAGKRLNPKKLDFVEVDVGTTYCPACSEPFGSVFIAANTALVGLVLEMKVFDAESDEHASRIAKSVIGKALTDVPLNVVDVEEFD</sequence>
<evidence type="ECO:0000255" key="1">
    <source>
        <dbReference type="HAMAP-Rule" id="MF_01223"/>
    </source>
</evidence>
<reference key="1">
    <citation type="journal article" date="2009" name="ISME J.">
        <title>The genome sequence of the psychrophilic archaeon, Methanococcoides burtonii: the role of genome evolution in cold adaptation.</title>
        <authorList>
            <person name="Allen M.A."/>
            <person name="Lauro F.M."/>
            <person name="Williams T.J."/>
            <person name="Burg D."/>
            <person name="Siddiqui K.S."/>
            <person name="De Francisci D."/>
            <person name="Chong K.W."/>
            <person name="Pilak O."/>
            <person name="Chew H.H."/>
            <person name="De Maere M.Z."/>
            <person name="Ting L."/>
            <person name="Katrib M."/>
            <person name="Ng C."/>
            <person name="Sowers K.R."/>
            <person name="Galperin M.Y."/>
            <person name="Anderson I.J."/>
            <person name="Ivanova N."/>
            <person name="Dalin E."/>
            <person name="Martinez M."/>
            <person name="Lapidus A."/>
            <person name="Hauser L."/>
            <person name="Land M."/>
            <person name="Thomas T."/>
            <person name="Cavicchioli R."/>
        </authorList>
    </citation>
    <scope>NUCLEOTIDE SEQUENCE [LARGE SCALE GENOMIC DNA]</scope>
    <source>
        <strain>DSM 6242 / NBRC 107633 / OCM 468 / ACE-M</strain>
    </source>
</reference>
<name>Y968_METBU</name>
<accession>Q12XB7</accession>
<gene>
    <name type="ordered locus">Mbur_0968</name>
</gene>
<protein>
    <recommendedName>
        <fullName evidence="1">UPF0212 protein Mbur_0968</fullName>
    </recommendedName>
</protein>
<organism>
    <name type="scientific">Methanococcoides burtonii (strain DSM 6242 / NBRC 107633 / OCM 468 / ACE-M)</name>
    <dbReference type="NCBI Taxonomy" id="259564"/>
    <lineage>
        <taxon>Archaea</taxon>
        <taxon>Methanobacteriati</taxon>
        <taxon>Methanobacteriota</taxon>
        <taxon>Stenosarchaea group</taxon>
        <taxon>Methanomicrobia</taxon>
        <taxon>Methanosarcinales</taxon>
        <taxon>Methanosarcinaceae</taxon>
        <taxon>Methanococcoides</taxon>
    </lineage>
</organism>
<feature type="chain" id="PRO_1000066788" description="UPF0212 protein Mbur_0968">
    <location>
        <begin position="1"/>
        <end position="114"/>
    </location>
</feature>
<proteinExistence type="inferred from homology"/>